<name>UPP_PSEPK</name>
<evidence type="ECO:0000255" key="1">
    <source>
        <dbReference type="HAMAP-Rule" id="MF_01218"/>
    </source>
</evidence>
<keyword id="KW-0021">Allosteric enzyme</keyword>
<keyword id="KW-0328">Glycosyltransferase</keyword>
<keyword id="KW-0342">GTP-binding</keyword>
<keyword id="KW-0460">Magnesium</keyword>
<keyword id="KW-0547">Nucleotide-binding</keyword>
<keyword id="KW-1185">Reference proteome</keyword>
<keyword id="KW-0808">Transferase</keyword>
<accession>Q88PV2</accession>
<comment type="function">
    <text evidence="1">Catalyzes the conversion of uracil and 5-phospho-alpha-D-ribose 1-diphosphate (PRPP) to UMP and diphosphate.</text>
</comment>
<comment type="catalytic activity">
    <reaction evidence="1">
        <text>UMP + diphosphate = 5-phospho-alpha-D-ribose 1-diphosphate + uracil</text>
        <dbReference type="Rhea" id="RHEA:13017"/>
        <dbReference type="ChEBI" id="CHEBI:17568"/>
        <dbReference type="ChEBI" id="CHEBI:33019"/>
        <dbReference type="ChEBI" id="CHEBI:57865"/>
        <dbReference type="ChEBI" id="CHEBI:58017"/>
        <dbReference type="EC" id="2.4.2.9"/>
    </reaction>
</comment>
<comment type="cofactor">
    <cofactor evidence="1">
        <name>Mg(2+)</name>
        <dbReference type="ChEBI" id="CHEBI:18420"/>
    </cofactor>
    <text evidence="1">Binds 1 Mg(2+) ion per subunit. The magnesium is bound as Mg-PRPP.</text>
</comment>
<comment type="activity regulation">
    <text evidence="1">Allosterically activated by GTP.</text>
</comment>
<comment type="pathway">
    <text evidence="1">Pyrimidine metabolism; UMP biosynthesis via salvage pathway; UMP from uracil: step 1/1.</text>
</comment>
<comment type="similarity">
    <text evidence="1">Belongs to the UPRTase family.</text>
</comment>
<feature type="chain" id="PRO_0000120870" description="Uracil phosphoribosyltransferase">
    <location>
        <begin position="1"/>
        <end position="212"/>
    </location>
</feature>
<feature type="binding site" evidence="1">
    <location>
        <position position="78"/>
    </location>
    <ligand>
        <name>5-phospho-alpha-D-ribose 1-diphosphate</name>
        <dbReference type="ChEBI" id="CHEBI:58017"/>
    </ligand>
</feature>
<feature type="binding site" evidence="1">
    <location>
        <position position="103"/>
    </location>
    <ligand>
        <name>5-phospho-alpha-D-ribose 1-diphosphate</name>
        <dbReference type="ChEBI" id="CHEBI:58017"/>
    </ligand>
</feature>
<feature type="binding site" evidence="1">
    <location>
        <begin position="130"/>
        <end position="138"/>
    </location>
    <ligand>
        <name>5-phospho-alpha-D-ribose 1-diphosphate</name>
        <dbReference type="ChEBI" id="CHEBI:58017"/>
    </ligand>
</feature>
<feature type="binding site" evidence="1">
    <location>
        <position position="193"/>
    </location>
    <ligand>
        <name>uracil</name>
        <dbReference type="ChEBI" id="CHEBI:17568"/>
    </ligand>
</feature>
<feature type="binding site" evidence="1">
    <location>
        <begin position="198"/>
        <end position="200"/>
    </location>
    <ligand>
        <name>uracil</name>
        <dbReference type="ChEBI" id="CHEBI:17568"/>
    </ligand>
</feature>
<feature type="binding site" evidence="1">
    <location>
        <position position="199"/>
    </location>
    <ligand>
        <name>5-phospho-alpha-D-ribose 1-diphosphate</name>
        <dbReference type="ChEBI" id="CHEBI:58017"/>
    </ligand>
</feature>
<protein>
    <recommendedName>
        <fullName evidence="1">Uracil phosphoribosyltransferase</fullName>
        <ecNumber evidence="1">2.4.2.9</ecNumber>
    </recommendedName>
    <alternativeName>
        <fullName evidence="1">UMP pyrophosphorylase</fullName>
    </alternativeName>
    <alternativeName>
        <fullName evidence="1">UPRTase</fullName>
    </alternativeName>
</protein>
<reference key="1">
    <citation type="journal article" date="2002" name="Environ. Microbiol.">
        <title>Complete genome sequence and comparative analysis of the metabolically versatile Pseudomonas putida KT2440.</title>
        <authorList>
            <person name="Nelson K.E."/>
            <person name="Weinel C."/>
            <person name="Paulsen I.T."/>
            <person name="Dodson R.J."/>
            <person name="Hilbert H."/>
            <person name="Martins dos Santos V.A.P."/>
            <person name="Fouts D.E."/>
            <person name="Gill S.R."/>
            <person name="Pop M."/>
            <person name="Holmes M."/>
            <person name="Brinkac L.M."/>
            <person name="Beanan M.J."/>
            <person name="DeBoy R.T."/>
            <person name="Daugherty S.C."/>
            <person name="Kolonay J.F."/>
            <person name="Madupu R."/>
            <person name="Nelson W.C."/>
            <person name="White O."/>
            <person name="Peterson J.D."/>
            <person name="Khouri H.M."/>
            <person name="Hance I."/>
            <person name="Chris Lee P."/>
            <person name="Holtzapple E.K."/>
            <person name="Scanlan D."/>
            <person name="Tran K."/>
            <person name="Moazzez A."/>
            <person name="Utterback T.R."/>
            <person name="Rizzo M."/>
            <person name="Lee K."/>
            <person name="Kosack D."/>
            <person name="Moestl D."/>
            <person name="Wedler H."/>
            <person name="Lauber J."/>
            <person name="Stjepandic D."/>
            <person name="Hoheisel J."/>
            <person name="Straetz M."/>
            <person name="Heim S."/>
            <person name="Kiewitz C."/>
            <person name="Eisen J.A."/>
            <person name="Timmis K.N."/>
            <person name="Duesterhoeft A."/>
            <person name="Tuemmler B."/>
            <person name="Fraser C.M."/>
        </authorList>
    </citation>
    <scope>NUCLEOTIDE SEQUENCE [LARGE SCALE GENOMIC DNA]</scope>
    <source>
        <strain>ATCC 47054 / DSM 6125 / CFBP 8728 / NCIMB 11950 / KT2440</strain>
    </source>
</reference>
<dbReference type="EC" id="2.4.2.9" evidence="1"/>
<dbReference type="EMBL" id="AE015451">
    <property type="protein sequence ID" value="AAN66371.1"/>
    <property type="molecule type" value="Genomic_DNA"/>
</dbReference>
<dbReference type="RefSeq" id="NP_742907.1">
    <property type="nucleotide sequence ID" value="NC_002947.4"/>
</dbReference>
<dbReference type="RefSeq" id="WP_003247366.1">
    <property type="nucleotide sequence ID" value="NZ_CP169744.1"/>
</dbReference>
<dbReference type="SMR" id="Q88PV2"/>
<dbReference type="STRING" id="160488.PP_0746"/>
<dbReference type="PaxDb" id="160488-PP_0746"/>
<dbReference type="KEGG" id="ppu:PP_0746"/>
<dbReference type="PATRIC" id="fig|160488.4.peg.800"/>
<dbReference type="eggNOG" id="COG0035">
    <property type="taxonomic scope" value="Bacteria"/>
</dbReference>
<dbReference type="HOGENOM" id="CLU_067096_2_2_6"/>
<dbReference type="OrthoDB" id="9781675at2"/>
<dbReference type="PhylomeDB" id="Q88PV2"/>
<dbReference type="BioCyc" id="PPUT160488:G1G01-821-MONOMER"/>
<dbReference type="UniPathway" id="UPA00574">
    <property type="reaction ID" value="UER00636"/>
</dbReference>
<dbReference type="Proteomes" id="UP000000556">
    <property type="component" value="Chromosome"/>
</dbReference>
<dbReference type="GO" id="GO:0005525">
    <property type="term" value="F:GTP binding"/>
    <property type="evidence" value="ECO:0007669"/>
    <property type="project" value="UniProtKB-KW"/>
</dbReference>
<dbReference type="GO" id="GO:0000287">
    <property type="term" value="F:magnesium ion binding"/>
    <property type="evidence" value="ECO:0007669"/>
    <property type="project" value="UniProtKB-UniRule"/>
</dbReference>
<dbReference type="GO" id="GO:0004845">
    <property type="term" value="F:uracil phosphoribosyltransferase activity"/>
    <property type="evidence" value="ECO:0007669"/>
    <property type="project" value="UniProtKB-UniRule"/>
</dbReference>
<dbReference type="GO" id="GO:0044206">
    <property type="term" value="P:UMP salvage"/>
    <property type="evidence" value="ECO:0007669"/>
    <property type="project" value="UniProtKB-UniRule"/>
</dbReference>
<dbReference type="GO" id="GO:0006223">
    <property type="term" value="P:uracil salvage"/>
    <property type="evidence" value="ECO:0007669"/>
    <property type="project" value="InterPro"/>
</dbReference>
<dbReference type="CDD" id="cd06223">
    <property type="entry name" value="PRTases_typeI"/>
    <property type="match status" value="1"/>
</dbReference>
<dbReference type="FunFam" id="3.40.50.2020:FF:000003">
    <property type="entry name" value="Uracil phosphoribosyltransferase"/>
    <property type="match status" value="1"/>
</dbReference>
<dbReference type="Gene3D" id="3.40.50.2020">
    <property type="match status" value="1"/>
</dbReference>
<dbReference type="HAMAP" id="MF_01218_B">
    <property type="entry name" value="Upp_B"/>
    <property type="match status" value="1"/>
</dbReference>
<dbReference type="InterPro" id="IPR000836">
    <property type="entry name" value="PRibTrfase_dom"/>
</dbReference>
<dbReference type="InterPro" id="IPR029057">
    <property type="entry name" value="PRTase-like"/>
</dbReference>
<dbReference type="InterPro" id="IPR034332">
    <property type="entry name" value="Upp_B"/>
</dbReference>
<dbReference type="InterPro" id="IPR050054">
    <property type="entry name" value="UPRTase/APRTase"/>
</dbReference>
<dbReference type="InterPro" id="IPR005765">
    <property type="entry name" value="Ura_phspho_trans"/>
</dbReference>
<dbReference type="NCBIfam" id="NF001097">
    <property type="entry name" value="PRK00129.1"/>
    <property type="match status" value="1"/>
</dbReference>
<dbReference type="NCBIfam" id="TIGR01091">
    <property type="entry name" value="upp"/>
    <property type="match status" value="1"/>
</dbReference>
<dbReference type="PANTHER" id="PTHR32315">
    <property type="entry name" value="ADENINE PHOSPHORIBOSYLTRANSFERASE"/>
    <property type="match status" value="1"/>
</dbReference>
<dbReference type="PANTHER" id="PTHR32315:SF4">
    <property type="entry name" value="URACIL PHOSPHORIBOSYLTRANSFERASE, CHLOROPLASTIC"/>
    <property type="match status" value="1"/>
</dbReference>
<dbReference type="Pfam" id="PF14681">
    <property type="entry name" value="UPRTase"/>
    <property type="match status" value="1"/>
</dbReference>
<dbReference type="SUPFAM" id="SSF53271">
    <property type="entry name" value="PRTase-like"/>
    <property type="match status" value="1"/>
</dbReference>
<proteinExistence type="inferred from homology"/>
<sequence length="212" mass="23000">MPTREIRHPLIRHKLGLMRRADISTKNFRELAQEVGALLTYEATQDLPLETYEIDGWCGKVSVEKIAGKKITVVPILRAGIGMLDGVLSLIPGAKVSAVGVARNEETLEAHTYLEKLAPDINQRLALIIDPMLATGGSMVATIDLLKKAGCKEIRAMVLVAAPEGIEVVEKAHPDVKIYTASIDQRLNEHGYIVPGLGDAGDKIFGTKQKDA</sequence>
<organism>
    <name type="scientific">Pseudomonas putida (strain ATCC 47054 / DSM 6125 / CFBP 8728 / NCIMB 11950 / KT2440)</name>
    <dbReference type="NCBI Taxonomy" id="160488"/>
    <lineage>
        <taxon>Bacteria</taxon>
        <taxon>Pseudomonadati</taxon>
        <taxon>Pseudomonadota</taxon>
        <taxon>Gammaproteobacteria</taxon>
        <taxon>Pseudomonadales</taxon>
        <taxon>Pseudomonadaceae</taxon>
        <taxon>Pseudomonas</taxon>
    </lineage>
</organism>
<gene>
    <name evidence="1" type="primary">upp</name>
    <name type="ordered locus">PP_0746</name>
</gene>